<dbReference type="EC" id="2.7.13.3"/>
<dbReference type="EMBL" id="CP000046">
    <property type="protein sequence ID" value="AAW37498.1"/>
    <property type="molecule type" value="Genomic_DNA"/>
</dbReference>
<dbReference type="RefSeq" id="WP_000127982.1">
    <property type="nucleotide sequence ID" value="NZ_JBGOFO010000001.1"/>
</dbReference>
<dbReference type="SMR" id="Q5HJF6"/>
<dbReference type="KEGG" id="sac:SACOL0202"/>
<dbReference type="HOGENOM" id="CLU_525720_0_0_9"/>
<dbReference type="Proteomes" id="UP000000530">
    <property type="component" value="Chromosome"/>
</dbReference>
<dbReference type="GO" id="GO:0005886">
    <property type="term" value="C:plasma membrane"/>
    <property type="evidence" value="ECO:0007669"/>
    <property type="project" value="UniProtKB-SubCell"/>
</dbReference>
<dbReference type="GO" id="GO:0005524">
    <property type="term" value="F:ATP binding"/>
    <property type="evidence" value="ECO:0007669"/>
    <property type="project" value="UniProtKB-KW"/>
</dbReference>
<dbReference type="GO" id="GO:0000155">
    <property type="term" value="F:phosphorelay sensor kinase activity"/>
    <property type="evidence" value="ECO:0007669"/>
    <property type="project" value="InterPro"/>
</dbReference>
<dbReference type="Gene3D" id="3.30.565.10">
    <property type="entry name" value="Histidine kinase-like ATPase, C-terminal domain"/>
    <property type="match status" value="1"/>
</dbReference>
<dbReference type="InterPro" id="IPR050640">
    <property type="entry name" value="Bact_2-comp_sensor_kinase"/>
</dbReference>
<dbReference type="InterPro" id="IPR036890">
    <property type="entry name" value="HATPase_C_sf"/>
</dbReference>
<dbReference type="InterPro" id="IPR010559">
    <property type="entry name" value="Sig_transdc_His_kin_internal"/>
</dbReference>
<dbReference type="PANTHER" id="PTHR34220">
    <property type="entry name" value="SENSOR HISTIDINE KINASE YPDA"/>
    <property type="match status" value="1"/>
</dbReference>
<dbReference type="PANTHER" id="PTHR34220:SF11">
    <property type="entry name" value="SENSOR PROTEIN KINASE HPTS"/>
    <property type="match status" value="1"/>
</dbReference>
<dbReference type="Pfam" id="PF02518">
    <property type="entry name" value="HATPase_c"/>
    <property type="match status" value="1"/>
</dbReference>
<dbReference type="Pfam" id="PF06580">
    <property type="entry name" value="His_kinase"/>
    <property type="match status" value="1"/>
</dbReference>
<dbReference type="SUPFAM" id="SSF55874">
    <property type="entry name" value="ATPase domain of HSP90 chaperone/DNA topoisomerase II/histidine kinase"/>
    <property type="match status" value="1"/>
</dbReference>
<accession>Q5HJF6</accession>
<evidence type="ECO:0000250" key="1"/>
<evidence type="ECO:0000250" key="2">
    <source>
        <dbReference type="UniProtKB" id="Q2G1E0"/>
    </source>
</evidence>
<evidence type="ECO:0000255" key="3"/>
<evidence type="ECO:0000269" key="4">
    <source>
    </source>
</evidence>
<evidence type="ECO:0000305" key="5"/>
<name>HPTS_STAAC</name>
<reference key="1">
    <citation type="journal article" date="2005" name="J. Bacteriol.">
        <title>Insights on evolution of virulence and resistance from the complete genome analysis of an early methicillin-resistant Staphylococcus aureus strain and a biofilm-producing methicillin-resistant Staphylococcus epidermidis strain.</title>
        <authorList>
            <person name="Gill S.R."/>
            <person name="Fouts D.E."/>
            <person name="Archer G.L."/>
            <person name="Mongodin E.F."/>
            <person name="DeBoy R.T."/>
            <person name="Ravel J."/>
            <person name="Paulsen I.T."/>
            <person name="Kolonay J.F."/>
            <person name="Brinkac L.M."/>
            <person name="Beanan M.J."/>
            <person name="Dodson R.J."/>
            <person name="Daugherty S.C."/>
            <person name="Madupu R."/>
            <person name="Angiuoli S.V."/>
            <person name="Durkin A.S."/>
            <person name="Haft D.H."/>
            <person name="Vamathevan J.J."/>
            <person name="Khouri H."/>
            <person name="Utterback T.R."/>
            <person name="Lee C."/>
            <person name="Dimitrov G."/>
            <person name="Jiang L."/>
            <person name="Qin H."/>
            <person name="Weidman J."/>
            <person name="Tran K."/>
            <person name="Kang K.H."/>
            <person name="Hance I.R."/>
            <person name="Nelson K.E."/>
            <person name="Fraser C.M."/>
        </authorList>
    </citation>
    <scope>NUCLEOTIDE SEQUENCE [LARGE SCALE GENOMIC DNA]</scope>
    <source>
        <strain>COL</strain>
    </source>
</reference>
<reference key="2">
    <citation type="journal article" date="2007" name="J. Bacteriol.">
        <title>Anaerobic gene expression in Staphylococcus aureus.</title>
        <authorList>
            <person name="Fuchs S."/>
            <person name="Pane-Farre J."/>
            <person name="Kohler C."/>
            <person name="Hecker M."/>
            <person name="Engelmann S."/>
        </authorList>
    </citation>
    <scope>INDUCTION DURING ANAEROBIC GROWTH</scope>
</reference>
<feature type="chain" id="PRO_0000299120" description="Sensor protein kinase HptS">
    <location>
        <begin position="1"/>
        <end position="518"/>
    </location>
</feature>
<feature type="transmembrane region" description="Helical" evidence="3">
    <location>
        <begin position="20"/>
        <end position="40"/>
    </location>
</feature>
<feature type="transmembrane region" description="Helical" evidence="3">
    <location>
        <begin position="222"/>
        <end position="242"/>
    </location>
</feature>
<feature type="domain" description="Histidine kinase">
    <location>
        <begin position="297"/>
        <end position="513"/>
    </location>
</feature>
<feature type="modified residue" description="Phosphohistidine; by autocatalysis" evidence="1">
    <location>
        <position position="325"/>
    </location>
</feature>
<protein>
    <recommendedName>
        <fullName>Sensor protein kinase HptS</fullName>
        <ecNumber>2.7.13.3</ecNumber>
    </recommendedName>
</protein>
<sequence>MTAYKPYRHQLRRSLFASTIFPVFLVIIIGLVSFYAIYIWIEHRTIHQHVDESQSSLHHTEKQIQTFITQHNNSFQELDLTNHHDVTATKRELLKLIHQQPATLYYELSGPNQFITNNYEHLNTKNMYLFSTHQLKFKNSTYMLKIYMANTPRLSEIKKDNRQFALIVDQYDNILYANDDRFTIGEKYRPQQFGFMNESVKLNHADHRLIIYKDIHENIEDGITLLIVMAVVLVLLVIFGFISADNMAKRQTKDIETIIQKIYYAKNRHLGTYTPLKNNSELEEINNYIYDLFESNEQLIHSIEHTERRLRDIQLKEIERQFQPHFLFNTMQTIQYLITLSPKLAQTVVQQLSQMLRYSLRTNSHTVELNEELNYIEQYVAIQNIRFDDMIKLHIESSEEARHQTIGKMMLQPLIENAIKHGRDTESLDITIRLTLARQNLHVLVCDNGIGMSSSRLQYVRQSLNNDVFDTKHLGLNHLHNKAMIQYGSHARLHIFSKRNQGTLICYKIPLSRGNVDV</sequence>
<comment type="function">
    <text evidence="2">Member of the two-component regulatory system HptS/HptR that regulates genes involved in hexose phosphate transport system in response to changes in extracellular phosphate sources. May act as a sensor protein kinase which is autophosphorylated at a histidine residue and transfers its phosphate group to the conserved aspartic acid residue in the regulatory domain of HptS. In turn, HptS antagonizes CcpA-dependent transcription of a subset of CcpA-regulated genes involved in antibiotic susceptibility.</text>
</comment>
<comment type="catalytic activity">
    <reaction>
        <text>ATP + protein L-histidine = ADP + protein N-phospho-L-histidine.</text>
        <dbReference type="EC" id="2.7.13.3"/>
    </reaction>
</comment>
<comment type="subcellular location">
    <subcellularLocation>
        <location evidence="5">Cell membrane</location>
        <topology evidence="5">Multi-pass membrane protein</topology>
    </subcellularLocation>
</comment>
<comment type="induction">
    <text evidence="4">Up-regulated during anaerobic growth.</text>
</comment>
<comment type="PTM">
    <text evidence="1">Autophosphorylated.</text>
</comment>
<keyword id="KW-0067">ATP-binding</keyword>
<keyword id="KW-1003">Cell membrane</keyword>
<keyword id="KW-0418">Kinase</keyword>
<keyword id="KW-0472">Membrane</keyword>
<keyword id="KW-0547">Nucleotide-binding</keyword>
<keyword id="KW-0597">Phosphoprotein</keyword>
<keyword id="KW-0808">Transferase</keyword>
<keyword id="KW-0812">Transmembrane</keyword>
<keyword id="KW-1133">Transmembrane helix</keyword>
<keyword id="KW-0902">Two-component regulatory system</keyword>
<gene>
    <name type="primary">hptS</name>
    <name type="ordered locus">SACOL0202</name>
</gene>
<organism>
    <name type="scientific">Staphylococcus aureus (strain COL)</name>
    <dbReference type="NCBI Taxonomy" id="93062"/>
    <lineage>
        <taxon>Bacteria</taxon>
        <taxon>Bacillati</taxon>
        <taxon>Bacillota</taxon>
        <taxon>Bacilli</taxon>
        <taxon>Bacillales</taxon>
        <taxon>Staphylococcaceae</taxon>
        <taxon>Staphylococcus</taxon>
    </lineage>
</organism>
<proteinExistence type="evidence at transcript level"/>